<reference key="1">
    <citation type="journal article" date="2009" name="Genome Res.">
        <title>Complete genome of the cellulolytic thermophile Acidothermus cellulolyticus 11B provides insights into its ecophysiological and evolutionary adaptations.</title>
        <authorList>
            <person name="Barabote R.D."/>
            <person name="Xie G."/>
            <person name="Leu D.H."/>
            <person name="Normand P."/>
            <person name="Necsulea A."/>
            <person name="Daubin V."/>
            <person name="Medigue C."/>
            <person name="Adney W.S."/>
            <person name="Xu X.C."/>
            <person name="Lapidus A."/>
            <person name="Parales R.E."/>
            <person name="Detter C."/>
            <person name="Pujic P."/>
            <person name="Bruce D."/>
            <person name="Lavire C."/>
            <person name="Challacombe J.F."/>
            <person name="Brettin T.S."/>
            <person name="Berry A.M."/>
        </authorList>
    </citation>
    <scope>NUCLEOTIDE SEQUENCE [LARGE SCALE GENOMIC DNA]</scope>
    <source>
        <strain>ATCC 43068 / DSM 8971 / 11B</strain>
    </source>
</reference>
<comment type="function">
    <text evidence="2">Involved in base excision repair of DNA damaged by oxidation or by mutagenic agents. Acts as a DNA glycosylase that recognizes and removes damaged bases. Has a preference for oxidized purines, such as 7,8-dihydro-8-oxoguanine (8-oxoG). Has AP (apurinic/apyrimidinic) lyase activity and introduces nicks in the DNA strand. Cleaves the DNA backbone by beta-delta elimination to generate a single-strand break at the site of the removed base with both 3'- and 5'-phosphates.</text>
</comment>
<comment type="catalytic activity">
    <reaction evidence="2">
        <text>Hydrolysis of DNA containing ring-opened 7-methylguanine residues, releasing 2,6-diamino-4-hydroxy-5-(N-methyl)formamidopyrimidine.</text>
        <dbReference type="EC" id="3.2.2.23"/>
    </reaction>
</comment>
<comment type="catalytic activity">
    <reaction evidence="2">
        <text>2'-deoxyribonucleotide-(2'-deoxyribose 5'-phosphate)-2'-deoxyribonucleotide-DNA = a 3'-end 2'-deoxyribonucleotide-(2,3-dehydro-2,3-deoxyribose 5'-phosphate)-DNA + a 5'-end 5'-phospho-2'-deoxyribonucleoside-DNA + H(+)</text>
        <dbReference type="Rhea" id="RHEA:66592"/>
        <dbReference type="Rhea" id="RHEA-COMP:13180"/>
        <dbReference type="Rhea" id="RHEA-COMP:16897"/>
        <dbReference type="Rhea" id="RHEA-COMP:17067"/>
        <dbReference type="ChEBI" id="CHEBI:15378"/>
        <dbReference type="ChEBI" id="CHEBI:136412"/>
        <dbReference type="ChEBI" id="CHEBI:157695"/>
        <dbReference type="ChEBI" id="CHEBI:167181"/>
        <dbReference type="EC" id="4.2.99.18"/>
    </reaction>
</comment>
<comment type="cofactor">
    <cofactor evidence="2">
        <name>Zn(2+)</name>
        <dbReference type="ChEBI" id="CHEBI:29105"/>
    </cofactor>
    <text evidence="2">Binds 1 zinc ion per subunit.</text>
</comment>
<comment type="subunit">
    <text evidence="2">Monomer.</text>
</comment>
<comment type="similarity">
    <text evidence="2">Belongs to the FPG family.</text>
</comment>
<name>FPG_ACIC1</name>
<feature type="initiator methionine" description="Removed" evidence="1">
    <location>
        <position position="1"/>
    </location>
</feature>
<feature type="chain" id="PRO_1000008666" description="Formamidopyrimidine-DNA glycosylase">
    <location>
        <begin position="2"/>
        <end position="284"/>
    </location>
</feature>
<feature type="zinc finger region" description="FPG-type" evidence="2">
    <location>
        <begin position="243"/>
        <end position="277"/>
    </location>
</feature>
<feature type="active site" description="Schiff-base intermediate with DNA" evidence="2">
    <location>
        <position position="2"/>
    </location>
</feature>
<feature type="active site" description="Proton donor" evidence="2">
    <location>
        <position position="3"/>
    </location>
</feature>
<feature type="active site" description="Proton donor; for beta-elimination activity" evidence="2">
    <location>
        <position position="61"/>
    </location>
</feature>
<feature type="active site" description="Proton donor; for delta-elimination activity" evidence="2">
    <location>
        <position position="267"/>
    </location>
</feature>
<feature type="binding site" evidence="2">
    <location>
        <position position="95"/>
    </location>
    <ligand>
        <name>DNA</name>
        <dbReference type="ChEBI" id="CHEBI:16991"/>
    </ligand>
</feature>
<feature type="binding site" evidence="2">
    <location>
        <position position="115"/>
    </location>
    <ligand>
        <name>DNA</name>
        <dbReference type="ChEBI" id="CHEBI:16991"/>
    </ligand>
</feature>
<feature type="binding site" evidence="2">
    <location>
        <position position="157"/>
    </location>
    <ligand>
        <name>DNA</name>
        <dbReference type="ChEBI" id="CHEBI:16991"/>
    </ligand>
</feature>
<sequence length="284" mass="31544">MPELPEVETIRRGLARHLVGRRIGYAEVFHPRAVRRHSGGAADFTGRLIGRRIQAVLRRGKYLWFALDSDLALLAHLGMSGQFLLADAASPSPKHLRARFAFTDGDPELRFVDQRTFGGLTLAPLIADVPASISHIAPDILDVAFDEAEFHRRFTQRRTGVKRALLDQTLISGVGNIYADEALWRARLHYATPTVDISAATCRRLLAALRAVFRAALRAGGTSFDALYVNVNGQSGFFDRSLAVYGRAGQPCRRCGTAIVREPFMNRSSFRCPACQPVPRRPHW</sequence>
<proteinExistence type="inferred from homology"/>
<accession>A0LV85</accession>
<evidence type="ECO:0000250" key="1"/>
<evidence type="ECO:0000255" key="2">
    <source>
        <dbReference type="HAMAP-Rule" id="MF_00103"/>
    </source>
</evidence>
<dbReference type="EC" id="3.2.2.23" evidence="2"/>
<dbReference type="EC" id="4.2.99.18" evidence="2"/>
<dbReference type="EMBL" id="CP000481">
    <property type="protein sequence ID" value="ABK53345.1"/>
    <property type="molecule type" value="Genomic_DNA"/>
</dbReference>
<dbReference type="RefSeq" id="WP_011720408.1">
    <property type="nucleotide sequence ID" value="NC_008578.1"/>
</dbReference>
<dbReference type="SMR" id="A0LV85"/>
<dbReference type="FunCoup" id="A0LV85">
    <property type="interactions" value="68"/>
</dbReference>
<dbReference type="STRING" id="351607.Acel_1573"/>
<dbReference type="KEGG" id="ace:Acel_1573"/>
<dbReference type="eggNOG" id="COG0266">
    <property type="taxonomic scope" value="Bacteria"/>
</dbReference>
<dbReference type="HOGENOM" id="CLU_038423_1_2_11"/>
<dbReference type="InParanoid" id="A0LV85"/>
<dbReference type="OrthoDB" id="9800855at2"/>
<dbReference type="Proteomes" id="UP000008221">
    <property type="component" value="Chromosome"/>
</dbReference>
<dbReference type="GO" id="GO:0034039">
    <property type="term" value="F:8-oxo-7,8-dihydroguanine DNA N-glycosylase activity"/>
    <property type="evidence" value="ECO:0007669"/>
    <property type="project" value="TreeGrafter"/>
</dbReference>
<dbReference type="GO" id="GO:0140078">
    <property type="term" value="F:class I DNA-(apurinic or apyrimidinic site) endonuclease activity"/>
    <property type="evidence" value="ECO:0007669"/>
    <property type="project" value="UniProtKB-EC"/>
</dbReference>
<dbReference type="GO" id="GO:0003684">
    <property type="term" value="F:damaged DNA binding"/>
    <property type="evidence" value="ECO:0007669"/>
    <property type="project" value="InterPro"/>
</dbReference>
<dbReference type="GO" id="GO:0008270">
    <property type="term" value="F:zinc ion binding"/>
    <property type="evidence" value="ECO:0007669"/>
    <property type="project" value="UniProtKB-UniRule"/>
</dbReference>
<dbReference type="GO" id="GO:0006284">
    <property type="term" value="P:base-excision repair"/>
    <property type="evidence" value="ECO:0007669"/>
    <property type="project" value="InterPro"/>
</dbReference>
<dbReference type="CDD" id="cd08966">
    <property type="entry name" value="EcFpg-like_N"/>
    <property type="match status" value="1"/>
</dbReference>
<dbReference type="FunFam" id="1.10.8.50:FF:000003">
    <property type="entry name" value="Formamidopyrimidine-DNA glycosylase"/>
    <property type="match status" value="1"/>
</dbReference>
<dbReference type="Gene3D" id="1.10.8.50">
    <property type="match status" value="1"/>
</dbReference>
<dbReference type="Gene3D" id="3.20.190.10">
    <property type="entry name" value="MutM-like, N-terminal"/>
    <property type="match status" value="1"/>
</dbReference>
<dbReference type="HAMAP" id="MF_00103">
    <property type="entry name" value="Fapy_DNA_glycosyl"/>
    <property type="match status" value="1"/>
</dbReference>
<dbReference type="InterPro" id="IPR015886">
    <property type="entry name" value="DNA_glyclase/AP_lyase_DNA-bd"/>
</dbReference>
<dbReference type="InterPro" id="IPR020629">
    <property type="entry name" value="Formamido-pyr_DNA_Glyclase"/>
</dbReference>
<dbReference type="InterPro" id="IPR012319">
    <property type="entry name" value="FPG_cat"/>
</dbReference>
<dbReference type="InterPro" id="IPR035937">
    <property type="entry name" value="MutM-like_N-ter"/>
</dbReference>
<dbReference type="InterPro" id="IPR010979">
    <property type="entry name" value="Ribosomal_uS13-like_H2TH"/>
</dbReference>
<dbReference type="InterPro" id="IPR000214">
    <property type="entry name" value="Znf_DNA_glyclase/AP_lyase"/>
</dbReference>
<dbReference type="InterPro" id="IPR010663">
    <property type="entry name" value="Znf_FPG/IleRS"/>
</dbReference>
<dbReference type="NCBIfam" id="TIGR00577">
    <property type="entry name" value="fpg"/>
    <property type="match status" value="1"/>
</dbReference>
<dbReference type="NCBIfam" id="NF002211">
    <property type="entry name" value="PRK01103.1"/>
    <property type="match status" value="1"/>
</dbReference>
<dbReference type="PANTHER" id="PTHR22993">
    <property type="entry name" value="FORMAMIDOPYRIMIDINE-DNA GLYCOSYLASE"/>
    <property type="match status" value="1"/>
</dbReference>
<dbReference type="PANTHER" id="PTHR22993:SF9">
    <property type="entry name" value="FORMAMIDOPYRIMIDINE-DNA GLYCOSYLASE"/>
    <property type="match status" value="1"/>
</dbReference>
<dbReference type="Pfam" id="PF01149">
    <property type="entry name" value="Fapy_DNA_glyco"/>
    <property type="match status" value="1"/>
</dbReference>
<dbReference type="Pfam" id="PF06831">
    <property type="entry name" value="H2TH"/>
    <property type="match status" value="1"/>
</dbReference>
<dbReference type="Pfam" id="PF06827">
    <property type="entry name" value="zf-FPG_IleRS"/>
    <property type="match status" value="1"/>
</dbReference>
<dbReference type="SMART" id="SM00898">
    <property type="entry name" value="Fapy_DNA_glyco"/>
    <property type="match status" value="1"/>
</dbReference>
<dbReference type="SMART" id="SM01232">
    <property type="entry name" value="H2TH"/>
    <property type="match status" value="1"/>
</dbReference>
<dbReference type="SUPFAM" id="SSF57716">
    <property type="entry name" value="Glucocorticoid receptor-like (DNA-binding domain)"/>
    <property type="match status" value="1"/>
</dbReference>
<dbReference type="SUPFAM" id="SSF81624">
    <property type="entry name" value="N-terminal domain of MutM-like DNA repair proteins"/>
    <property type="match status" value="1"/>
</dbReference>
<dbReference type="SUPFAM" id="SSF46946">
    <property type="entry name" value="S13-like H2TH domain"/>
    <property type="match status" value="1"/>
</dbReference>
<dbReference type="PROSITE" id="PS51068">
    <property type="entry name" value="FPG_CAT"/>
    <property type="match status" value="1"/>
</dbReference>
<dbReference type="PROSITE" id="PS51066">
    <property type="entry name" value="ZF_FPG_2"/>
    <property type="match status" value="1"/>
</dbReference>
<protein>
    <recommendedName>
        <fullName evidence="2">Formamidopyrimidine-DNA glycosylase</fullName>
        <shortName evidence="2">Fapy-DNA glycosylase</shortName>
        <ecNumber evidence="2">3.2.2.23</ecNumber>
    </recommendedName>
    <alternativeName>
        <fullName evidence="2">DNA-(apurinic or apyrimidinic site) lyase MutM</fullName>
        <shortName evidence="2">AP lyase MutM</shortName>
        <ecNumber evidence="2">4.2.99.18</ecNumber>
    </alternativeName>
</protein>
<organism>
    <name type="scientific">Acidothermus cellulolyticus (strain ATCC 43068 / DSM 8971 / 11B)</name>
    <dbReference type="NCBI Taxonomy" id="351607"/>
    <lineage>
        <taxon>Bacteria</taxon>
        <taxon>Bacillati</taxon>
        <taxon>Actinomycetota</taxon>
        <taxon>Actinomycetes</taxon>
        <taxon>Acidothermales</taxon>
        <taxon>Acidothermaceae</taxon>
        <taxon>Acidothermus</taxon>
    </lineage>
</organism>
<keyword id="KW-0227">DNA damage</keyword>
<keyword id="KW-0234">DNA repair</keyword>
<keyword id="KW-0238">DNA-binding</keyword>
<keyword id="KW-0326">Glycosidase</keyword>
<keyword id="KW-0378">Hydrolase</keyword>
<keyword id="KW-0456">Lyase</keyword>
<keyword id="KW-0479">Metal-binding</keyword>
<keyword id="KW-0511">Multifunctional enzyme</keyword>
<keyword id="KW-1185">Reference proteome</keyword>
<keyword id="KW-0862">Zinc</keyword>
<keyword id="KW-0863">Zinc-finger</keyword>
<gene>
    <name evidence="2" type="primary">mutM</name>
    <name evidence="2" type="synonym">fpg</name>
    <name type="ordered locus">Acel_1573</name>
</gene>